<feature type="chain" id="PRO_0000457937" description="Metal transporter Nramp2">
    <location>
        <begin position="1"/>
        <end position="536"/>
    </location>
</feature>
<feature type="transmembrane region" description="Helical; Name=1" evidence="1">
    <location>
        <begin position="76"/>
        <end position="96"/>
    </location>
</feature>
<feature type="transmembrane region" description="Helical; Name=2" evidence="1">
    <location>
        <begin position="104"/>
        <end position="124"/>
    </location>
</feature>
<feature type="transmembrane region" description="Helical; Name=3" evidence="1">
    <location>
        <begin position="161"/>
        <end position="181"/>
    </location>
</feature>
<feature type="transmembrane region" description="Helical; Name=4" evidence="1">
    <location>
        <begin position="185"/>
        <end position="205"/>
    </location>
</feature>
<feature type="transmembrane region" description="Helical; Name=5" evidence="1">
    <location>
        <begin position="213"/>
        <end position="233"/>
    </location>
</feature>
<feature type="transmembrane region" description="Helical; Name=6" evidence="1">
    <location>
        <begin position="259"/>
        <end position="279"/>
    </location>
</feature>
<feature type="transmembrane region" description="Helical; Name=7" evidence="1">
    <location>
        <begin position="305"/>
        <end position="325"/>
    </location>
</feature>
<feature type="transmembrane region" description="Helical; Name=8" evidence="1">
    <location>
        <begin position="347"/>
        <end position="367"/>
    </location>
</feature>
<feature type="transmembrane region" description="Helical; Name=9" evidence="1">
    <location>
        <begin position="400"/>
        <end position="420"/>
    </location>
</feature>
<feature type="transmembrane region" description="Helical; Name=10" evidence="1">
    <location>
        <begin position="435"/>
        <end position="455"/>
    </location>
</feature>
<feature type="transmembrane region" description="Helical; Name=11" evidence="1">
    <location>
        <begin position="465"/>
        <end position="485"/>
    </location>
</feature>
<feature type="transmembrane region" description="Helical; Name=12" evidence="1">
    <location>
        <begin position="492"/>
        <end position="512"/>
    </location>
</feature>
<feature type="region of interest" description="Disordered" evidence="3">
    <location>
        <begin position="1"/>
        <end position="37"/>
    </location>
</feature>
<feature type="compositionally biased region" description="Low complexity" evidence="3">
    <location>
        <begin position="22"/>
        <end position="36"/>
    </location>
</feature>
<feature type="glycosylation site" description="N-linked (GlcNAc...) asparagine" evidence="2">
    <location>
        <position position="38"/>
    </location>
</feature>
<keyword id="KW-0325">Glycoprotein</keyword>
<keyword id="KW-0406">Ion transport</keyword>
<keyword id="KW-0472">Membrane</keyword>
<keyword id="KW-1185">Reference proteome</keyword>
<keyword id="KW-0812">Transmembrane</keyword>
<keyword id="KW-1133">Transmembrane helix</keyword>
<keyword id="KW-0813">Transport</keyword>
<accession>B9GNS0</accession>
<evidence type="ECO:0000255" key="1"/>
<evidence type="ECO:0000255" key="2">
    <source>
        <dbReference type="PROSITE-ProRule" id="PRU00498"/>
    </source>
</evidence>
<evidence type="ECO:0000256" key="3">
    <source>
        <dbReference type="SAM" id="MobiDB-lite"/>
    </source>
</evidence>
<evidence type="ECO:0000303" key="4">
    <source>
    </source>
</evidence>
<evidence type="ECO:0000303" key="5">
    <source>
    </source>
</evidence>
<evidence type="ECO:0000305" key="6"/>
<organism>
    <name type="scientific">Populus trichocarpa</name>
    <name type="common">Western balsam poplar</name>
    <name type="synonym">Populus balsamifera subsp. trichocarpa</name>
    <dbReference type="NCBI Taxonomy" id="3694"/>
    <lineage>
        <taxon>Eukaryota</taxon>
        <taxon>Viridiplantae</taxon>
        <taxon>Streptophyta</taxon>
        <taxon>Embryophyta</taxon>
        <taxon>Tracheophyta</taxon>
        <taxon>Spermatophyta</taxon>
        <taxon>Magnoliopsida</taxon>
        <taxon>eudicotyledons</taxon>
        <taxon>Gunneridae</taxon>
        <taxon>Pentapetalae</taxon>
        <taxon>rosids</taxon>
        <taxon>fabids</taxon>
        <taxon>Malpighiales</taxon>
        <taxon>Salicaceae</taxon>
        <taxon>Saliceae</taxon>
        <taxon>Populus</taxon>
    </lineage>
</organism>
<comment type="function">
    <text evidence="4">Probable divalent metal transporter.</text>
</comment>
<comment type="subcellular location">
    <subcellularLocation>
        <location evidence="1">Membrane</location>
        <topology evidence="1">Multi-pass membrane protein</topology>
    </subcellularLocation>
</comment>
<comment type="similarity">
    <text evidence="6">Belongs to the NRAMP (TC 2.A.55) family.</text>
</comment>
<proteinExistence type="inferred from homology"/>
<gene>
    <name evidence="4 5" type="primary">NRAMP2</name>
    <name evidence="6" type="ordered locus">Potri.002G121000</name>
</gene>
<reference key="1">
    <citation type="journal article" date="2006" name="Science">
        <title>The genome of black cottonwood, Populus trichocarpa (Torr. &amp; Gray).</title>
        <authorList>
            <person name="Tuskan G.A."/>
            <person name="Difazio S."/>
            <person name="Jansson S."/>
            <person name="Bohlmann J."/>
            <person name="Grigoriev I."/>
            <person name="Hellsten U."/>
            <person name="Putnam N."/>
            <person name="Ralph S."/>
            <person name="Rombauts S."/>
            <person name="Salamov A."/>
            <person name="Schein J."/>
            <person name="Sterck L."/>
            <person name="Aerts A."/>
            <person name="Bhalerao R.R."/>
            <person name="Bhalerao R.P."/>
            <person name="Blaudez D."/>
            <person name="Boerjan W."/>
            <person name="Brun A."/>
            <person name="Brunner A."/>
            <person name="Busov V."/>
            <person name="Campbell M."/>
            <person name="Carlson J."/>
            <person name="Chalot M."/>
            <person name="Chapman J."/>
            <person name="Chen G.-L."/>
            <person name="Cooper D."/>
            <person name="Coutinho P.M."/>
            <person name="Couturier J."/>
            <person name="Covert S."/>
            <person name="Cronk Q."/>
            <person name="Cunningham R."/>
            <person name="Davis J."/>
            <person name="Degroeve S."/>
            <person name="Dejardin A."/>
            <person name="dePamphilis C.W."/>
            <person name="Detter J."/>
            <person name="Dirks B."/>
            <person name="Dubchak I."/>
            <person name="Duplessis S."/>
            <person name="Ehlting J."/>
            <person name="Ellis B."/>
            <person name="Gendler K."/>
            <person name="Goodstein D."/>
            <person name="Gribskov M."/>
            <person name="Grimwood J."/>
            <person name="Groover A."/>
            <person name="Gunter L."/>
            <person name="Hamberger B."/>
            <person name="Heinze B."/>
            <person name="Helariutta Y."/>
            <person name="Henrissat B."/>
            <person name="Holligan D."/>
            <person name="Holt R."/>
            <person name="Huang W."/>
            <person name="Islam-Faridi N."/>
            <person name="Jones S."/>
            <person name="Jones-Rhoades M."/>
            <person name="Jorgensen R."/>
            <person name="Joshi C."/>
            <person name="Kangasjaervi J."/>
            <person name="Karlsson J."/>
            <person name="Kelleher C."/>
            <person name="Kirkpatrick R."/>
            <person name="Kirst M."/>
            <person name="Kohler A."/>
            <person name="Kalluri U."/>
            <person name="Larimer F."/>
            <person name="Leebens-Mack J."/>
            <person name="Leple J.-C."/>
            <person name="Locascio P."/>
            <person name="Lou Y."/>
            <person name="Lucas S."/>
            <person name="Martin F."/>
            <person name="Montanini B."/>
            <person name="Napoli C."/>
            <person name="Nelson D.R."/>
            <person name="Nelson C."/>
            <person name="Nieminen K."/>
            <person name="Nilsson O."/>
            <person name="Pereda V."/>
            <person name="Peter G."/>
            <person name="Philippe R."/>
            <person name="Pilate G."/>
            <person name="Poliakov A."/>
            <person name="Razumovskaya J."/>
            <person name="Richardson P."/>
            <person name="Rinaldi C."/>
            <person name="Ritland K."/>
            <person name="Rouze P."/>
            <person name="Ryaboy D."/>
            <person name="Schmutz J."/>
            <person name="Schrader J."/>
            <person name="Segerman B."/>
            <person name="Shin H."/>
            <person name="Siddiqui A."/>
            <person name="Sterky F."/>
            <person name="Terry A."/>
            <person name="Tsai C.-J."/>
            <person name="Uberbacher E."/>
            <person name="Unneberg P."/>
            <person name="Vahala J."/>
            <person name="Wall K."/>
            <person name="Wessler S."/>
            <person name="Yang G."/>
            <person name="Yin T."/>
            <person name="Douglas C."/>
            <person name="Marra M."/>
            <person name="Sandberg G."/>
            <person name="Van de Peer Y."/>
            <person name="Rokhsar D.S."/>
        </authorList>
    </citation>
    <scope>NUCLEOTIDE SEQUENCE [LARGE SCALE GENOMIC DNA]</scope>
    <source>
        <strain>cv. Nisqually</strain>
    </source>
</reference>
<reference key="2">
    <citation type="journal article" date="2010" name="Cell. Mol. Life Sci.">
        <title>Genome-wide analysis of plant metal transporters, with an emphasis on poplar.</title>
        <authorList>
            <person name="Migeon A."/>
            <person name="Blaudez D."/>
            <person name="Wilkins O."/>
            <person name="Montanini B."/>
            <person name="Campbell M.M."/>
            <person name="Richaud P."/>
            <person name="Thomine S."/>
            <person name="Chalot M."/>
        </authorList>
    </citation>
    <scope>GENE FAMILY</scope>
    <scope>NOMENCLATURE</scope>
</reference>
<reference key="3">
    <citation type="journal article" date="2022" name="Mol. Biol. Evol.">
        <title>Duplication of NRAMP3 gene in poplars generated two homologous transporters with distinct functions.</title>
        <authorList>
            <person name="Pottier M."/>
            <person name="Le Thi V.A."/>
            <person name="Primard-Brisset C."/>
            <person name="Marion J."/>
            <person name="Bianchi M.W."/>
            <person name="Victor C."/>
            <person name="Dejardin A."/>
            <person name="Pilate G."/>
            <person name="Thomine S."/>
        </authorList>
    </citation>
    <scope>GENE FAMILY</scope>
    <source>
        <strain>cv. Nisqually</strain>
    </source>
</reference>
<name>NRMP2_POPTR</name>
<sequence length="536" mass="58576">MSSPSGGEDSKDDEKDEESNRLLPLSSSSQSQSLQSENYSDEVAFEAREKIVIVDVEGPHSIDAVDYVPPFSWRKLWLFTGPGFLMSIAFLDPGNLEGDLQAGAIAGYSLLWLLLWATVMGLLIQMLSARVGVATGRHLAELCRDEYSNWARYILWFMAEVALIGADIQEVIGSAIAIQILSNGFLPLWAGVLITASDCFMFLFLENYGVRKLEGVFAVLIATMALSFAWMCGDAKPSGKELLKGILIPRLGSKTIRQAVGVVGCVIMPHNVFLHSALVQSRKIDPQKKARVQEALTYYSIESSVALFVSFMINLFVTTVFAKGFYGTPQASSIGLVNAGQYLEEKYGGGLFPILYIWGIGLLAAGQSSTITGTYAGQFIMGGFLNLRLKKWTRALITRSFAIIPTIIVAIIFNTSEASLDILNEWLNVLQSMQIPFALIPLLTLVAKEQVMGVFKIGPVLERLAWTIAVLVILINGYLLIDFFISEVKGLLFGFLIGSGTVAYVSFIIYLVSRCGTSPSNGLSLELSERITCNGN</sequence>
<dbReference type="EMBL" id="CM009291">
    <property type="protein sequence ID" value="PNT49289.1"/>
    <property type="molecule type" value="Genomic_DNA"/>
</dbReference>
<dbReference type="RefSeq" id="XP_002302424.2">
    <property type="nucleotide sequence ID" value="XM_002302388.2"/>
</dbReference>
<dbReference type="SMR" id="B9GNS0"/>
<dbReference type="FunCoup" id="B9GNS0">
    <property type="interactions" value="3607"/>
</dbReference>
<dbReference type="STRING" id="3694.B9GNS0"/>
<dbReference type="EnsemblPlants" id="Potri.002G121000.1.v4.1">
    <property type="protein sequence ID" value="Potri.002G121000.1.v4.1"/>
    <property type="gene ID" value="Potri.002G121000.v4.1"/>
</dbReference>
<dbReference type="GeneID" id="7472676"/>
<dbReference type="Gramene" id="Potri.002G121000.1.v4.1">
    <property type="protein sequence ID" value="Potri.002G121000.1.v4.1"/>
    <property type="gene ID" value="Potri.002G121000.v4.1"/>
</dbReference>
<dbReference type="KEGG" id="pop:7472676"/>
<dbReference type="eggNOG" id="KOG1291">
    <property type="taxonomic scope" value="Eukaryota"/>
</dbReference>
<dbReference type="InParanoid" id="B9GNS0"/>
<dbReference type="OMA" id="PWMQFYQ"/>
<dbReference type="OrthoDB" id="409173at2759"/>
<dbReference type="Proteomes" id="UP000006729">
    <property type="component" value="Chromosome 2"/>
</dbReference>
<dbReference type="ExpressionAtlas" id="B9GNS0">
    <property type="expression patterns" value="baseline and differential"/>
</dbReference>
<dbReference type="GO" id="GO:0016020">
    <property type="term" value="C:membrane"/>
    <property type="evidence" value="ECO:0007669"/>
    <property type="project" value="UniProtKB-SubCell"/>
</dbReference>
<dbReference type="GO" id="GO:0005802">
    <property type="term" value="C:trans-Golgi network"/>
    <property type="evidence" value="ECO:0000318"/>
    <property type="project" value="GO_Central"/>
</dbReference>
<dbReference type="GO" id="GO:0015086">
    <property type="term" value="F:cadmium ion transmembrane transporter activity"/>
    <property type="evidence" value="ECO:0000318"/>
    <property type="project" value="GO_Central"/>
</dbReference>
<dbReference type="GO" id="GO:0005384">
    <property type="term" value="F:manganese ion transmembrane transporter activity"/>
    <property type="evidence" value="ECO:0000318"/>
    <property type="project" value="GO_Central"/>
</dbReference>
<dbReference type="GO" id="GO:0034755">
    <property type="term" value="P:iron ion transmembrane transport"/>
    <property type="evidence" value="ECO:0000318"/>
    <property type="project" value="GO_Central"/>
</dbReference>
<dbReference type="GO" id="GO:0006828">
    <property type="term" value="P:manganese ion transport"/>
    <property type="evidence" value="ECO:0000318"/>
    <property type="project" value="GO_Central"/>
</dbReference>
<dbReference type="HAMAP" id="MF_00221">
    <property type="entry name" value="NRAMP"/>
    <property type="match status" value="1"/>
</dbReference>
<dbReference type="InterPro" id="IPR001046">
    <property type="entry name" value="NRAMP_fam"/>
</dbReference>
<dbReference type="NCBIfam" id="TIGR01197">
    <property type="entry name" value="nramp"/>
    <property type="match status" value="1"/>
</dbReference>
<dbReference type="NCBIfam" id="NF037982">
    <property type="entry name" value="Nramp_1"/>
    <property type="match status" value="1"/>
</dbReference>
<dbReference type="PANTHER" id="PTHR11706:SF104">
    <property type="entry name" value="METAL TRANSPORTER NRAMP2"/>
    <property type="match status" value="1"/>
</dbReference>
<dbReference type="PANTHER" id="PTHR11706">
    <property type="entry name" value="SOLUTE CARRIER PROTEIN FAMILY 11 MEMBER"/>
    <property type="match status" value="1"/>
</dbReference>
<dbReference type="Pfam" id="PF01566">
    <property type="entry name" value="Nramp"/>
    <property type="match status" value="1"/>
</dbReference>
<dbReference type="PRINTS" id="PR00447">
    <property type="entry name" value="NATRESASSCMP"/>
</dbReference>
<protein>
    <recommendedName>
        <fullName evidence="4 5">Metal transporter Nramp2</fullName>
        <shortName evidence="5">PotriNRAMP2</shortName>
        <shortName evidence="4">PtNRAMP2</shortName>
    </recommendedName>
    <alternativeName>
        <fullName evidence="6">Natural resistance-associated macrophage protein 2</fullName>
    </alternativeName>
</protein>